<comment type="function">
    <text evidence="3 5">Secreted effector that induces necrotic lesions in Nicotiana benthamiana (PubMed:22352720). Interacts with the host receptor-like kinases (RLKs) BAK1/SERK3 and BKK1/SERK4, inhibits their kinase activity and suppresses INF1-induced pathogen-associated molecular pattern (PAMP)-triggered immunity (PTI) in N.benthamiana (PubMed:30584105). Also interacts with the host receptor-like cytoplasmic kinase (RLCK) BIK1 and inhibits its kinase activity, thereby inhibiting PAMP-induced ROS generation (PubMed:30584105). In PTI, phosphorylation relaying by RLKs and RLCKs is critical for the initiation of downstream signaling (PubMed:30584105).</text>
</comment>
<comment type="subunit">
    <text evidence="5">Interacts with the host pattern recognition receptor (PRR)-associated kinases BAK1/SERK3, BKK1/SERK4 and BIK1.</text>
</comment>
<comment type="subcellular location">
    <subcellularLocation>
        <location evidence="3 4">Secreted</location>
    </subcellularLocation>
    <subcellularLocation>
        <location evidence="4">Host cytoplasm</location>
    </subcellularLocation>
    <text evidence="4">Secreted, via the endoplasmic reticulum-to-Golgi route and subsequent exocytosis, and accumulates in a ring-like region around the neck of the biotrophic primary hyphae at the pathogen-plant interface.</text>
</comment>
<comment type="induction">
    <text evidence="3">Preferentially expressed in biotrophic invasive hyphae at the post-invasive stage.</text>
</comment>
<comment type="domain">
    <text evidence="5">The C-terminal region from residues 103 to 132 is important for BAK1/SERK3-binding and the host cell death suppression.</text>
</comment>
<comment type="similarity">
    <text evidence="7">Belongs to the NIS1 effector family.</text>
</comment>
<accession>N4VG36</accession>
<accession>H7CE97</accession>
<evidence type="ECO:0000255" key="1"/>
<evidence type="ECO:0000255" key="2">
    <source>
        <dbReference type="PROSITE-ProRule" id="PRU00498"/>
    </source>
</evidence>
<evidence type="ECO:0000269" key="3">
    <source>
    </source>
</evidence>
<evidence type="ECO:0000269" key="4">
    <source>
    </source>
</evidence>
<evidence type="ECO:0000269" key="5">
    <source>
    </source>
</evidence>
<evidence type="ECO:0000303" key="6">
    <source>
    </source>
</evidence>
<evidence type="ECO:0000305" key="7"/>
<dbReference type="EMBL" id="AB669517">
    <property type="protein sequence ID" value="BAL70334.1"/>
    <property type="molecule type" value="Genomic_DNA"/>
</dbReference>
<dbReference type="EMBL" id="KB725990">
    <property type="protein sequence ID" value="ENH80006.1"/>
    <property type="molecule type" value="Genomic_DNA"/>
</dbReference>
<dbReference type="EMBL" id="AMCV02000002">
    <property type="protein sequence ID" value="TDZ25263.1"/>
    <property type="molecule type" value="Genomic_DNA"/>
</dbReference>
<dbReference type="SMR" id="N4VG36"/>
<dbReference type="STRING" id="1213857.N4VG36"/>
<dbReference type="GlyCosmos" id="N4VG36">
    <property type="glycosylation" value="4 sites, No reported glycans"/>
</dbReference>
<dbReference type="EnsemblFungi" id="ENH80006">
    <property type="protein sequence ID" value="ENH80006"/>
    <property type="gene ID" value="Cob_01067"/>
</dbReference>
<dbReference type="eggNOG" id="ENOG502S8NB">
    <property type="taxonomic scope" value="Eukaryota"/>
</dbReference>
<dbReference type="HOGENOM" id="CLU_138726_0_0_1"/>
<dbReference type="OrthoDB" id="3913322at2759"/>
<dbReference type="Proteomes" id="UP000014480">
    <property type="component" value="Unassembled WGS sequence"/>
</dbReference>
<dbReference type="GO" id="GO:0005576">
    <property type="term" value="C:extracellular region"/>
    <property type="evidence" value="ECO:0007669"/>
    <property type="project" value="UniProtKB-SubCell"/>
</dbReference>
<dbReference type="GO" id="GO:0030430">
    <property type="term" value="C:host cell cytoplasm"/>
    <property type="evidence" value="ECO:0007669"/>
    <property type="project" value="UniProtKB-SubCell"/>
</dbReference>
<dbReference type="InterPro" id="IPR045469">
    <property type="entry name" value="Nis1"/>
</dbReference>
<dbReference type="Pfam" id="PF19271">
    <property type="entry name" value="Nis1"/>
    <property type="match status" value="1"/>
</dbReference>
<name>NIS1_COLOR</name>
<proteinExistence type="evidence at protein level"/>
<feature type="signal peptide" evidence="1">
    <location>
        <begin position="1"/>
        <end position="19"/>
    </location>
</feature>
<feature type="chain" id="PRO_5004123125" description="Necrosis-inducing secreted protein 1">
    <location>
        <begin position="20"/>
        <end position="162"/>
    </location>
</feature>
<feature type="region of interest" description="BAK1/SERK3-binding" evidence="5">
    <location>
        <begin position="103"/>
        <end position="132"/>
    </location>
</feature>
<feature type="glycosylation site" description="N-linked (GlcNAc...) asparagine" evidence="2">
    <location>
        <position position="88"/>
    </location>
</feature>
<feature type="glycosylation site" description="N-linked (GlcNAc...) asparagine" evidence="2">
    <location>
        <position position="126"/>
    </location>
</feature>
<feature type="glycosylation site" description="N-linked (GlcNAc...) asparagine" evidence="2">
    <location>
        <position position="133"/>
    </location>
</feature>
<feature type="glycosylation site" description="N-linked (GlcNAc...) asparagine" evidence="2">
    <location>
        <position position="150"/>
    </location>
</feature>
<feature type="mutagenesis site" description="Specifically reduces the interaction with N.benthamiana SERK3 and its paralogs but not Arabidopsis BAK1." evidence="5">
    <original>Y</original>
    <variation>A</variation>
    <location>
        <position position="125"/>
    </location>
</feature>
<keyword id="KW-0325">Glycoprotein</keyword>
<keyword id="KW-1035">Host cytoplasm</keyword>
<keyword id="KW-1185">Reference proteome</keyword>
<keyword id="KW-0964">Secreted</keyword>
<keyword id="KW-0732">Signal</keyword>
<keyword id="KW-0843">Virulence</keyword>
<gene>
    <name evidence="6" type="primary">NIS1</name>
    <name type="ORF">Cob_01067</name>
    <name type="ORF">Cob_v001680</name>
</gene>
<protein>
    <recommendedName>
        <fullName evidence="6">Necrosis-inducing secreted protein 1</fullName>
    </recommendedName>
    <alternativeName>
        <fullName evidence="6">Secreted effector NIS1</fullName>
    </alternativeName>
</protein>
<sequence>MQFLTSLAAAASLVSLASARISGIALPQTVKAGDNINAIVVTEGYIQSVQDIAIAFGVAPAASAYPGTLSTLLGSFYLGPEQSNVQNNITEPITIPESLVPGEYVIAASLFSLYGASSSPTVSNYNVTVNVGNETSTTYVRSQFYVGNSNSTVCLGGYTRKI</sequence>
<organism>
    <name type="scientific">Colletotrichum orbiculare (strain 104-T / ATCC 96160 / CBS 514.97 / LARS 414 / MAFF 240422)</name>
    <name type="common">Cucumber anthracnose fungus</name>
    <name type="synonym">Colletotrichum lagenarium</name>
    <dbReference type="NCBI Taxonomy" id="1213857"/>
    <lineage>
        <taxon>Eukaryota</taxon>
        <taxon>Fungi</taxon>
        <taxon>Dikarya</taxon>
        <taxon>Ascomycota</taxon>
        <taxon>Pezizomycotina</taxon>
        <taxon>Sordariomycetes</taxon>
        <taxon>Hypocreomycetidae</taxon>
        <taxon>Glomerellales</taxon>
        <taxon>Glomerellaceae</taxon>
        <taxon>Colletotrichum</taxon>
        <taxon>Colletotrichum orbiculare species complex</taxon>
    </lineage>
</organism>
<reference key="1">
    <citation type="journal article" date="2012" name="Mol. Plant Microbe Interact.">
        <title>Cell death of Nicotiana benthamiana is induced by secreted protein NIS1 of Colletotrichum orbiculare and is suppressed by a homologue of CgDN3.</title>
        <authorList>
            <person name="Yoshino K."/>
            <person name="Irieda H."/>
            <person name="Sugimoto F."/>
            <person name="Yoshioka H."/>
            <person name="Okuno T."/>
            <person name="Takano Y."/>
        </authorList>
    </citation>
    <scope>NUCLEOTIDE SEQUENCE [GENOMIC DNA]</scope>
    <scope>INDUCTION</scope>
    <scope>SUBCELLULAR LOCATION</scope>
    <scope>FUNCTION</scope>
    <source>
        <strain>104-T / ATCC 96160 / CBS 514.97 / LARS 414 / MAFF 240422</strain>
    </source>
</reference>
<reference key="2">
    <citation type="journal article" date="2013" name="New Phytol.">
        <title>Comparative genomic and transcriptomic analyses reveal the hemibiotrophic stage shift of Colletotrichum fungi.</title>
        <authorList>
            <person name="Gan P."/>
            <person name="Ikeda K."/>
            <person name="Irieda H."/>
            <person name="Narusaka M."/>
            <person name="O'Connell R.J."/>
            <person name="Narusaka Y."/>
            <person name="Takano Y."/>
            <person name="Kubo Y."/>
            <person name="Shirasu K."/>
        </authorList>
    </citation>
    <scope>NUCLEOTIDE SEQUENCE [LARGE SCALE GENOMIC DNA]</scope>
    <source>
        <strain>104-T / ATCC 96160 / CBS 514.97 / LARS 414 / MAFF 240422</strain>
    </source>
</reference>
<reference key="3">
    <citation type="journal article" date="2019" name="Mol. Plant Microbe Interact.">
        <title>Genome sequence resources for four phytopathogenic fungi from the Colletotrichum orbiculare species complex.</title>
        <authorList>
            <person name="Gan P."/>
            <person name="Tsushima A."/>
            <person name="Narusaka M."/>
            <person name="Narusaka Y."/>
            <person name="Takano Y."/>
            <person name="Kubo Y."/>
            <person name="Shirasu K."/>
        </authorList>
    </citation>
    <scope>GENOME REANNOTATION</scope>
    <source>
        <strain>104-T / ATCC 96160 / CBS 514.97 / LARS 414 / MAFF 240422</strain>
    </source>
</reference>
<reference key="4">
    <citation type="journal article" date="2014" name="Plant Cell">
        <title>Colletotrichum orbiculare secretes virulence effectors to a biotrophic interface at the primary hyphal neck via exocytosis coupled with SEC22-mediated traffic.</title>
        <authorList>
            <person name="Irieda H."/>
            <person name="Maeda H."/>
            <person name="Akiyama K."/>
            <person name="Hagiwara A."/>
            <person name="Saitoh H."/>
            <person name="Uemura A."/>
            <person name="Terauchi R."/>
            <person name="Takano Y."/>
        </authorList>
    </citation>
    <scope>SUBCELLULAR LOCATION</scope>
</reference>
<reference key="5">
    <citation type="journal article" date="2019" name="Proc. Natl. Acad. Sci. U.S.A.">
        <title>Conserved fungal effector suppresses PAMP-triggered immunity by targeting plant immune kinases.</title>
        <authorList>
            <person name="Irieda H."/>
            <person name="Inoue Y."/>
            <person name="Mori M."/>
            <person name="Yamada K."/>
            <person name="Oshikawa Y."/>
            <person name="Saitoh H."/>
            <person name="Uemura A."/>
            <person name="Terauchi R."/>
            <person name="Kitakura S."/>
            <person name="Kosaka A."/>
            <person name="Singkaravanit-Ogawa S."/>
            <person name="Takano Y."/>
        </authorList>
    </citation>
    <scope>FUNCTION</scope>
    <scope>INTERACTION WITH HOST BAK1/SERK3; BKK1/SERK4 AND BIK1</scope>
    <scope>MUTAGENESIS OF TYR-125</scope>
</reference>